<protein>
    <recommendedName>
        <fullName evidence="1">Small ribosomal subunit protein uS9</fullName>
    </recommendedName>
    <alternativeName>
        <fullName evidence="3">30S ribosomal protein S9</fullName>
    </alternativeName>
</protein>
<dbReference type="EMBL" id="CP001114">
    <property type="protein sequence ID" value="ACO45589.1"/>
    <property type="molecule type" value="Genomic_DNA"/>
</dbReference>
<dbReference type="RefSeq" id="WP_012692712.1">
    <property type="nucleotide sequence ID" value="NC_012526.1"/>
</dbReference>
<dbReference type="SMR" id="C1D165"/>
<dbReference type="STRING" id="546414.Deide_07310"/>
<dbReference type="PaxDb" id="546414-Deide_07310"/>
<dbReference type="KEGG" id="ddr:Deide_07310"/>
<dbReference type="eggNOG" id="COG0103">
    <property type="taxonomic scope" value="Bacteria"/>
</dbReference>
<dbReference type="HOGENOM" id="CLU_046483_2_1_0"/>
<dbReference type="OrthoDB" id="9803965at2"/>
<dbReference type="Proteomes" id="UP000002208">
    <property type="component" value="Chromosome"/>
</dbReference>
<dbReference type="GO" id="GO:0022627">
    <property type="term" value="C:cytosolic small ribosomal subunit"/>
    <property type="evidence" value="ECO:0007669"/>
    <property type="project" value="TreeGrafter"/>
</dbReference>
<dbReference type="GO" id="GO:0003723">
    <property type="term" value="F:RNA binding"/>
    <property type="evidence" value="ECO:0007669"/>
    <property type="project" value="TreeGrafter"/>
</dbReference>
<dbReference type="GO" id="GO:0003735">
    <property type="term" value="F:structural constituent of ribosome"/>
    <property type="evidence" value="ECO:0007669"/>
    <property type="project" value="InterPro"/>
</dbReference>
<dbReference type="GO" id="GO:0006412">
    <property type="term" value="P:translation"/>
    <property type="evidence" value="ECO:0007669"/>
    <property type="project" value="UniProtKB-UniRule"/>
</dbReference>
<dbReference type="FunFam" id="3.30.230.10:FF:000001">
    <property type="entry name" value="30S ribosomal protein S9"/>
    <property type="match status" value="1"/>
</dbReference>
<dbReference type="Gene3D" id="3.30.230.10">
    <property type="match status" value="1"/>
</dbReference>
<dbReference type="HAMAP" id="MF_00532_B">
    <property type="entry name" value="Ribosomal_uS9_B"/>
    <property type="match status" value="1"/>
</dbReference>
<dbReference type="InterPro" id="IPR020568">
    <property type="entry name" value="Ribosomal_Su5_D2-typ_SF"/>
</dbReference>
<dbReference type="InterPro" id="IPR000754">
    <property type="entry name" value="Ribosomal_uS9"/>
</dbReference>
<dbReference type="InterPro" id="IPR023035">
    <property type="entry name" value="Ribosomal_uS9_bac/plastid"/>
</dbReference>
<dbReference type="InterPro" id="IPR020574">
    <property type="entry name" value="Ribosomal_uS9_CS"/>
</dbReference>
<dbReference type="InterPro" id="IPR014721">
    <property type="entry name" value="Ribsml_uS5_D2-typ_fold_subgr"/>
</dbReference>
<dbReference type="NCBIfam" id="NF001099">
    <property type="entry name" value="PRK00132.1"/>
    <property type="match status" value="1"/>
</dbReference>
<dbReference type="PANTHER" id="PTHR21569">
    <property type="entry name" value="RIBOSOMAL PROTEIN S9"/>
    <property type="match status" value="1"/>
</dbReference>
<dbReference type="PANTHER" id="PTHR21569:SF1">
    <property type="entry name" value="SMALL RIBOSOMAL SUBUNIT PROTEIN US9M"/>
    <property type="match status" value="1"/>
</dbReference>
<dbReference type="Pfam" id="PF00380">
    <property type="entry name" value="Ribosomal_S9"/>
    <property type="match status" value="1"/>
</dbReference>
<dbReference type="SUPFAM" id="SSF54211">
    <property type="entry name" value="Ribosomal protein S5 domain 2-like"/>
    <property type="match status" value="1"/>
</dbReference>
<dbReference type="PROSITE" id="PS00360">
    <property type="entry name" value="RIBOSOMAL_S9"/>
    <property type="match status" value="1"/>
</dbReference>
<reference key="1">
    <citation type="journal article" date="2009" name="PLoS Genet.">
        <title>Alliance of proteomics and genomics to unravel the specificities of Sahara bacterium Deinococcus deserti.</title>
        <authorList>
            <person name="de Groot A."/>
            <person name="Dulermo R."/>
            <person name="Ortet P."/>
            <person name="Blanchard L."/>
            <person name="Guerin P."/>
            <person name="Fernandez B."/>
            <person name="Vacherie B."/>
            <person name="Dossat C."/>
            <person name="Jolivet E."/>
            <person name="Siguier P."/>
            <person name="Chandler M."/>
            <person name="Barakat M."/>
            <person name="Dedieu A."/>
            <person name="Barbe V."/>
            <person name="Heulin T."/>
            <person name="Sommer S."/>
            <person name="Achouak W."/>
            <person name="Armengaud J."/>
        </authorList>
    </citation>
    <scope>NUCLEOTIDE SEQUENCE [LARGE SCALE GENOMIC DNA]</scope>
    <source>
        <strain>DSM 17065 / CIP 109153 / LMG 22923 / VCD115</strain>
    </source>
</reference>
<organism>
    <name type="scientific">Deinococcus deserti (strain DSM 17065 / CIP 109153 / LMG 22923 / VCD115)</name>
    <dbReference type="NCBI Taxonomy" id="546414"/>
    <lineage>
        <taxon>Bacteria</taxon>
        <taxon>Thermotogati</taxon>
        <taxon>Deinococcota</taxon>
        <taxon>Deinococci</taxon>
        <taxon>Deinococcales</taxon>
        <taxon>Deinococcaceae</taxon>
        <taxon>Deinococcus</taxon>
    </lineage>
</organism>
<proteinExistence type="inferred from homology"/>
<evidence type="ECO:0000255" key="1">
    <source>
        <dbReference type="HAMAP-Rule" id="MF_00532"/>
    </source>
</evidence>
<evidence type="ECO:0000256" key="2">
    <source>
        <dbReference type="SAM" id="MobiDB-lite"/>
    </source>
</evidence>
<evidence type="ECO:0000305" key="3"/>
<gene>
    <name evidence="1" type="primary">rpsI</name>
    <name type="ordered locus">Deide_07310</name>
</gene>
<name>RS9_DEIDV</name>
<keyword id="KW-1185">Reference proteome</keyword>
<keyword id="KW-0687">Ribonucleoprotein</keyword>
<keyword id="KW-0689">Ribosomal protein</keyword>
<sequence>MAIQQPEQFYGTGRRKSAVARVFLRPGEGKIIVNGKEFQTYFRGLLRAVHALQAFRETGTAGRYDAVITVNGGGPTGQADAIKLGIARALLKVNPDFRAQMKPKGLLTRDPREVERKKYGLKKARRAPQFSKR</sequence>
<comment type="similarity">
    <text evidence="1">Belongs to the universal ribosomal protein uS9 family.</text>
</comment>
<accession>C1D165</accession>
<feature type="chain" id="PRO_1000211828" description="Small ribosomal subunit protein uS9">
    <location>
        <begin position="1"/>
        <end position="133"/>
    </location>
</feature>
<feature type="region of interest" description="Disordered" evidence="2">
    <location>
        <begin position="102"/>
        <end position="133"/>
    </location>
</feature>
<feature type="compositionally biased region" description="Basic and acidic residues" evidence="2">
    <location>
        <begin position="107"/>
        <end position="118"/>
    </location>
</feature>
<feature type="compositionally biased region" description="Basic residues" evidence="2">
    <location>
        <begin position="119"/>
        <end position="133"/>
    </location>
</feature>